<sequence length="11" mass="1459">EQFEDYGHMRF</sequence>
<proteinExistence type="evidence at protein level"/>
<accession>P85852</accession>
<protein>
    <recommendedName>
        <fullName evidence="4">Sulfakinin-1</fullName>
        <shortName evidence="4">EllSp-SK-1</shortName>
    </recommendedName>
</protein>
<dbReference type="GO" id="GO:0005576">
    <property type="term" value="C:extracellular region"/>
    <property type="evidence" value="ECO:0007669"/>
    <property type="project" value="UniProtKB-SubCell"/>
</dbReference>
<dbReference type="GO" id="GO:0005179">
    <property type="term" value="F:hormone activity"/>
    <property type="evidence" value="ECO:0007669"/>
    <property type="project" value="UniProtKB-KW"/>
</dbReference>
<dbReference type="GO" id="GO:0007218">
    <property type="term" value="P:neuropeptide signaling pathway"/>
    <property type="evidence" value="ECO:0007669"/>
    <property type="project" value="UniProtKB-KW"/>
</dbReference>
<dbReference type="InterPro" id="IPR013152">
    <property type="entry name" value="Gastrin/cholecystokinin_CS"/>
</dbReference>
<dbReference type="InterPro" id="IPR013259">
    <property type="entry name" value="Sulfakinin"/>
</dbReference>
<dbReference type="Pfam" id="PF08257">
    <property type="entry name" value="Sulfakinin"/>
    <property type="match status" value="1"/>
</dbReference>
<dbReference type="PROSITE" id="PS00259">
    <property type="entry name" value="GASTRIN"/>
    <property type="match status" value="1"/>
</dbReference>
<feature type="peptide" id="PRO_0000378872" description="Sulfakinin-1" evidence="3">
    <location>
        <begin position="1"/>
        <end position="11"/>
    </location>
</feature>
<feature type="modified residue" description="Sulfotyrosine" evidence="1">
    <location>
        <position position="6"/>
    </location>
</feature>
<feature type="modified residue" description="Phenylalanine amide" evidence="3">
    <location>
        <position position="11"/>
    </location>
</feature>
<organism>
    <name type="scientific">Elliptorhina sp. (strain SR-2005)</name>
    <name type="common">Hisser roach</name>
    <dbReference type="NCBI Taxonomy" id="348767"/>
    <lineage>
        <taxon>Eukaryota</taxon>
        <taxon>Metazoa</taxon>
        <taxon>Ecdysozoa</taxon>
        <taxon>Arthropoda</taxon>
        <taxon>Hexapoda</taxon>
        <taxon>Insecta</taxon>
        <taxon>Pterygota</taxon>
        <taxon>Neoptera</taxon>
        <taxon>Polyneoptera</taxon>
        <taxon>Dictyoptera</taxon>
        <taxon>Blattodea</taxon>
        <taxon>Blaberoidea</taxon>
        <taxon>Blaberidae</taxon>
        <taxon>Oxyhaloinae</taxon>
        <taxon>Elliptorhina</taxon>
    </lineage>
</organism>
<evidence type="ECO:0000250" key="1">
    <source>
        <dbReference type="UniProtKB" id="P41493"/>
    </source>
</evidence>
<evidence type="ECO:0000255" key="2"/>
<evidence type="ECO:0000269" key="3">
    <source>
    </source>
</evidence>
<evidence type="ECO:0000303" key="4">
    <source>
    </source>
</evidence>
<evidence type="ECO:0000305" key="5"/>
<keyword id="KW-0027">Amidation</keyword>
<keyword id="KW-0903">Direct protein sequencing</keyword>
<keyword id="KW-0372">Hormone</keyword>
<keyword id="KW-0527">Neuropeptide</keyword>
<keyword id="KW-0964">Secreted</keyword>
<keyword id="KW-0765">Sulfation</keyword>
<name>SK1_ELLSS</name>
<reference evidence="5" key="1">
    <citation type="journal article" date="2009" name="BMC Evol. Biol.">
        <title>A proteomic approach for studying insect phylogeny: CAPA peptides of ancient insect taxa (Dictyoptera, Blattoptera) as a test case.</title>
        <authorList>
            <person name="Roth S."/>
            <person name="Fromm B."/>
            <person name="Gaede G."/>
            <person name="Predel R."/>
        </authorList>
    </citation>
    <scope>PROTEIN SEQUENCE</scope>
    <scope>AMIDATION AT PHE-11</scope>
    <source>
        <tissue evidence="3">Corpora cardiaca</tissue>
    </source>
</reference>
<comment type="function">
    <text evidence="1">Myotropic peptide.</text>
</comment>
<comment type="subcellular location">
    <subcellularLocation>
        <location evidence="5">Secreted</location>
    </subcellularLocation>
</comment>
<comment type="similarity">
    <text evidence="2">Belongs to the gastrin/cholecystokinin family.</text>
</comment>